<organism>
    <name type="scientific">Salmonella enteritidis PT4 (strain P125109)</name>
    <dbReference type="NCBI Taxonomy" id="550537"/>
    <lineage>
        <taxon>Bacteria</taxon>
        <taxon>Pseudomonadati</taxon>
        <taxon>Pseudomonadota</taxon>
        <taxon>Gammaproteobacteria</taxon>
        <taxon>Enterobacterales</taxon>
        <taxon>Enterobacteriaceae</taxon>
        <taxon>Salmonella</taxon>
    </lineage>
</organism>
<comment type="function">
    <text evidence="1">Catalyzes the conversion of glucosamine-6-phosphate to glucosamine-1-phosphate.</text>
</comment>
<comment type="catalytic activity">
    <reaction evidence="1">
        <text>alpha-D-glucosamine 1-phosphate = D-glucosamine 6-phosphate</text>
        <dbReference type="Rhea" id="RHEA:23424"/>
        <dbReference type="ChEBI" id="CHEBI:58516"/>
        <dbReference type="ChEBI" id="CHEBI:58725"/>
        <dbReference type="EC" id="5.4.2.10"/>
    </reaction>
</comment>
<comment type="cofactor">
    <cofactor evidence="1">
        <name>Mg(2+)</name>
        <dbReference type="ChEBI" id="CHEBI:18420"/>
    </cofactor>
    <text evidence="1">Binds 1 Mg(2+) ion per subunit.</text>
</comment>
<comment type="PTM">
    <text evidence="1">Activated by phosphorylation.</text>
</comment>
<comment type="similarity">
    <text evidence="1">Belongs to the phosphohexose mutase family.</text>
</comment>
<reference key="1">
    <citation type="journal article" date="2008" name="Genome Res.">
        <title>Comparative genome analysis of Salmonella enteritidis PT4 and Salmonella gallinarum 287/91 provides insights into evolutionary and host adaptation pathways.</title>
        <authorList>
            <person name="Thomson N.R."/>
            <person name="Clayton D.J."/>
            <person name="Windhorst D."/>
            <person name="Vernikos G."/>
            <person name="Davidson S."/>
            <person name="Churcher C."/>
            <person name="Quail M.A."/>
            <person name="Stevens M."/>
            <person name="Jones M.A."/>
            <person name="Watson M."/>
            <person name="Barron A."/>
            <person name="Layton A."/>
            <person name="Pickard D."/>
            <person name="Kingsley R.A."/>
            <person name="Bignell A."/>
            <person name="Clark L."/>
            <person name="Harris B."/>
            <person name="Ormond D."/>
            <person name="Abdellah Z."/>
            <person name="Brooks K."/>
            <person name="Cherevach I."/>
            <person name="Chillingworth T."/>
            <person name="Woodward J."/>
            <person name="Norberczak H."/>
            <person name="Lord A."/>
            <person name="Arrowsmith C."/>
            <person name="Jagels K."/>
            <person name="Moule S."/>
            <person name="Mungall K."/>
            <person name="Saunders M."/>
            <person name="Whitehead S."/>
            <person name="Chabalgoity J.A."/>
            <person name="Maskell D."/>
            <person name="Humphreys T."/>
            <person name="Roberts M."/>
            <person name="Barrow P.A."/>
            <person name="Dougan G."/>
            <person name="Parkhill J."/>
        </authorList>
    </citation>
    <scope>NUCLEOTIDE SEQUENCE [LARGE SCALE GENOMIC DNA]</scope>
    <source>
        <strain>P125109</strain>
    </source>
</reference>
<gene>
    <name evidence="1" type="primary">glmM</name>
    <name type="ordered locus">SEN3127</name>
</gene>
<dbReference type="EC" id="5.4.2.10" evidence="1"/>
<dbReference type="EMBL" id="AM933172">
    <property type="protein sequence ID" value="CAR34703.1"/>
    <property type="molecule type" value="Genomic_DNA"/>
</dbReference>
<dbReference type="RefSeq" id="WP_000071169.1">
    <property type="nucleotide sequence ID" value="NC_011294.1"/>
</dbReference>
<dbReference type="SMR" id="B5QZW4"/>
<dbReference type="KEGG" id="set:SEN3127"/>
<dbReference type="HOGENOM" id="CLU_016950_7_0_6"/>
<dbReference type="Proteomes" id="UP000000613">
    <property type="component" value="Chromosome"/>
</dbReference>
<dbReference type="GO" id="GO:0005829">
    <property type="term" value="C:cytosol"/>
    <property type="evidence" value="ECO:0007669"/>
    <property type="project" value="TreeGrafter"/>
</dbReference>
<dbReference type="GO" id="GO:0000287">
    <property type="term" value="F:magnesium ion binding"/>
    <property type="evidence" value="ECO:0007669"/>
    <property type="project" value="UniProtKB-UniRule"/>
</dbReference>
<dbReference type="GO" id="GO:0008966">
    <property type="term" value="F:phosphoglucosamine mutase activity"/>
    <property type="evidence" value="ECO:0007669"/>
    <property type="project" value="UniProtKB-UniRule"/>
</dbReference>
<dbReference type="GO" id="GO:0004615">
    <property type="term" value="F:phosphomannomutase activity"/>
    <property type="evidence" value="ECO:0007669"/>
    <property type="project" value="TreeGrafter"/>
</dbReference>
<dbReference type="GO" id="GO:0005975">
    <property type="term" value="P:carbohydrate metabolic process"/>
    <property type="evidence" value="ECO:0007669"/>
    <property type="project" value="InterPro"/>
</dbReference>
<dbReference type="GO" id="GO:0009252">
    <property type="term" value="P:peptidoglycan biosynthetic process"/>
    <property type="evidence" value="ECO:0007669"/>
    <property type="project" value="TreeGrafter"/>
</dbReference>
<dbReference type="GO" id="GO:0006048">
    <property type="term" value="P:UDP-N-acetylglucosamine biosynthetic process"/>
    <property type="evidence" value="ECO:0007669"/>
    <property type="project" value="TreeGrafter"/>
</dbReference>
<dbReference type="CDD" id="cd05802">
    <property type="entry name" value="GlmM"/>
    <property type="match status" value="1"/>
</dbReference>
<dbReference type="FunFam" id="3.30.310.50:FF:000001">
    <property type="entry name" value="Phosphoglucosamine mutase"/>
    <property type="match status" value="1"/>
</dbReference>
<dbReference type="FunFam" id="3.40.120.10:FF:000001">
    <property type="entry name" value="Phosphoglucosamine mutase"/>
    <property type="match status" value="1"/>
</dbReference>
<dbReference type="FunFam" id="3.40.120.10:FF:000002">
    <property type="entry name" value="Phosphoglucosamine mutase"/>
    <property type="match status" value="1"/>
</dbReference>
<dbReference type="Gene3D" id="3.40.120.10">
    <property type="entry name" value="Alpha-D-Glucose-1,6-Bisphosphate, subunit A, domain 3"/>
    <property type="match status" value="3"/>
</dbReference>
<dbReference type="Gene3D" id="3.30.310.50">
    <property type="entry name" value="Alpha-D-phosphohexomutase, C-terminal domain"/>
    <property type="match status" value="1"/>
</dbReference>
<dbReference type="HAMAP" id="MF_01554_B">
    <property type="entry name" value="GlmM_B"/>
    <property type="match status" value="1"/>
</dbReference>
<dbReference type="InterPro" id="IPR005844">
    <property type="entry name" value="A-D-PHexomutase_a/b/a-I"/>
</dbReference>
<dbReference type="InterPro" id="IPR016055">
    <property type="entry name" value="A-D-PHexomutase_a/b/a-I/II/III"/>
</dbReference>
<dbReference type="InterPro" id="IPR005845">
    <property type="entry name" value="A-D-PHexomutase_a/b/a-II"/>
</dbReference>
<dbReference type="InterPro" id="IPR005846">
    <property type="entry name" value="A-D-PHexomutase_a/b/a-III"/>
</dbReference>
<dbReference type="InterPro" id="IPR005843">
    <property type="entry name" value="A-D-PHexomutase_C"/>
</dbReference>
<dbReference type="InterPro" id="IPR036900">
    <property type="entry name" value="A-D-PHexomutase_C_sf"/>
</dbReference>
<dbReference type="InterPro" id="IPR016066">
    <property type="entry name" value="A-D-PHexomutase_CS"/>
</dbReference>
<dbReference type="InterPro" id="IPR005841">
    <property type="entry name" value="Alpha-D-phosphohexomutase_SF"/>
</dbReference>
<dbReference type="InterPro" id="IPR006352">
    <property type="entry name" value="GlmM_bact"/>
</dbReference>
<dbReference type="InterPro" id="IPR050060">
    <property type="entry name" value="Phosphoglucosamine_mutase"/>
</dbReference>
<dbReference type="NCBIfam" id="TIGR01455">
    <property type="entry name" value="glmM"/>
    <property type="match status" value="1"/>
</dbReference>
<dbReference type="NCBIfam" id="NF008139">
    <property type="entry name" value="PRK10887.1"/>
    <property type="match status" value="1"/>
</dbReference>
<dbReference type="PANTHER" id="PTHR42946:SF1">
    <property type="entry name" value="PHOSPHOGLUCOMUTASE (ALPHA-D-GLUCOSE-1,6-BISPHOSPHATE-DEPENDENT)"/>
    <property type="match status" value="1"/>
</dbReference>
<dbReference type="PANTHER" id="PTHR42946">
    <property type="entry name" value="PHOSPHOHEXOSE MUTASE"/>
    <property type="match status" value="1"/>
</dbReference>
<dbReference type="Pfam" id="PF02878">
    <property type="entry name" value="PGM_PMM_I"/>
    <property type="match status" value="1"/>
</dbReference>
<dbReference type="Pfam" id="PF02879">
    <property type="entry name" value="PGM_PMM_II"/>
    <property type="match status" value="1"/>
</dbReference>
<dbReference type="Pfam" id="PF02880">
    <property type="entry name" value="PGM_PMM_III"/>
    <property type="match status" value="1"/>
</dbReference>
<dbReference type="Pfam" id="PF00408">
    <property type="entry name" value="PGM_PMM_IV"/>
    <property type="match status" value="1"/>
</dbReference>
<dbReference type="PRINTS" id="PR00509">
    <property type="entry name" value="PGMPMM"/>
</dbReference>
<dbReference type="SUPFAM" id="SSF55957">
    <property type="entry name" value="Phosphoglucomutase, C-terminal domain"/>
    <property type="match status" value="1"/>
</dbReference>
<dbReference type="SUPFAM" id="SSF53738">
    <property type="entry name" value="Phosphoglucomutase, first 3 domains"/>
    <property type="match status" value="3"/>
</dbReference>
<dbReference type="PROSITE" id="PS00710">
    <property type="entry name" value="PGM_PMM"/>
    <property type="match status" value="1"/>
</dbReference>
<protein>
    <recommendedName>
        <fullName evidence="1">Phosphoglucosamine mutase</fullName>
        <ecNumber evidence="1">5.4.2.10</ecNumber>
    </recommendedName>
</protein>
<keyword id="KW-0413">Isomerase</keyword>
<keyword id="KW-0460">Magnesium</keyword>
<keyword id="KW-0479">Metal-binding</keyword>
<keyword id="KW-0597">Phosphoprotein</keyword>
<accession>B5QZW4</accession>
<feature type="chain" id="PRO_1000201135" description="Phosphoglucosamine mutase">
    <location>
        <begin position="1"/>
        <end position="445"/>
    </location>
</feature>
<feature type="active site" description="Phosphoserine intermediate" evidence="1">
    <location>
        <position position="102"/>
    </location>
</feature>
<feature type="binding site" description="via phosphate group" evidence="1">
    <location>
        <position position="102"/>
    </location>
    <ligand>
        <name>Mg(2+)</name>
        <dbReference type="ChEBI" id="CHEBI:18420"/>
    </ligand>
</feature>
<feature type="binding site" evidence="1">
    <location>
        <position position="241"/>
    </location>
    <ligand>
        <name>Mg(2+)</name>
        <dbReference type="ChEBI" id="CHEBI:18420"/>
    </ligand>
</feature>
<feature type="binding site" evidence="1">
    <location>
        <position position="243"/>
    </location>
    <ligand>
        <name>Mg(2+)</name>
        <dbReference type="ChEBI" id="CHEBI:18420"/>
    </ligand>
</feature>
<feature type="binding site" evidence="1">
    <location>
        <position position="245"/>
    </location>
    <ligand>
        <name>Mg(2+)</name>
        <dbReference type="ChEBI" id="CHEBI:18420"/>
    </ligand>
</feature>
<feature type="modified residue" description="Phosphoserine" evidence="1">
    <location>
        <position position="102"/>
    </location>
</feature>
<name>GLMM_SALEP</name>
<proteinExistence type="inferred from homology"/>
<sequence>MSNRKYFGTDGIRGRVGNAPITPDFVLKLGWAAGKVLARHGSRKIIIGKDTRISGYMLESALEAGLAAAGLSASFTGPMPTPAVAYLTRTFRAEAGIVISASHNPFYDNGIKFFSIDGTKLPDDVEEAIEAEMEKEITCVDSAELGKASRIVDAAGRYIEFCKGTFPNELSLNGLKVVVDCANGATYHIAPNVLRELGATVIAIGCEPNGVNINEEVGATDVRALQARVLAEKADLGIALDGDGDRVIMVDHEGNKVDGDQIMYIIAREGLRQGQLRGGAVGTLMSNMGLELALKQLGIPFARAKVGDRYVLEKLQEKGWRIGAENSGHVILLDKTTTGDGIVAGLQVLAAMVRNHMSLHDLCSGMKMFPQILVNVRYTAGSGDPLENEAVKAVTADVEATLGNRGRVLLRKSGTEPLIRVMVEGEDEAQVTAFAHRIADAVKAV</sequence>
<evidence type="ECO:0000255" key="1">
    <source>
        <dbReference type="HAMAP-Rule" id="MF_01554"/>
    </source>
</evidence>